<accession>P55567</accession>
<geneLocation type="plasmid">
    <name>sym pNGR234a</name>
</geneLocation>
<dbReference type="EMBL" id="U00090">
    <property type="protein sequence ID" value="AAB91771.1"/>
    <property type="molecule type" value="Genomic_DNA"/>
</dbReference>
<dbReference type="RefSeq" id="NP_443974.1">
    <property type="nucleotide sequence ID" value="NC_000914.2"/>
</dbReference>
<dbReference type="RefSeq" id="WP_010875276.1">
    <property type="nucleotide sequence ID" value="NC_000914.2"/>
</dbReference>
<dbReference type="SMR" id="P55567"/>
<dbReference type="KEGG" id="rhi:NGR_a02510"/>
<dbReference type="PATRIC" id="fig|394.7.peg.261"/>
<dbReference type="eggNOG" id="COG3618">
    <property type="taxonomic scope" value="Bacteria"/>
</dbReference>
<dbReference type="HOGENOM" id="CLU_044590_3_1_5"/>
<dbReference type="OrthoDB" id="9787654at2"/>
<dbReference type="Proteomes" id="UP000001054">
    <property type="component" value="Plasmid pNGR234a"/>
</dbReference>
<dbReference type="GO" id="GO:0016787">
    <property type="term" value="F:hydrolase activity"/>
    <property type="evidence" value="ECO:0007669"/>
    <property type="project" value="InterPro"/>
</dbReference>
<dbReference type="Gene3D" id="3.20.20.140">
    <property type="entry name" value="Metal-dependent hydrolases"/>
    <property type="match status" value="1"/>
</dbReference>
<dbReference type="InterPro" id="IPR006680">
    <property type="entry name" value="Amidohydro-rel"/>
</dbReference>
<dbReference type="InterPro" id="IPR032466">
    <property type="entry name" value="Metal_Hydrolase"/>
</dbReference>
<dbReference type="InterPro" id="IPR052350">
    <property type="entry name" value="Metallo-dep_Lactonases"/>
</dbReference>
<dbReference type="PANTHER" id="PTHR43569">
    <property type="entry name" value="AMIDOHYDROLASE"/>
    <property type="match status" value="1"/>
</dbReference>
<dbReference type="PANTHER" id="PTHR43569:SF1">
    <property type="entry name" value="BLL3371 PROTEIN"/>
    <property type="match status" value="1"/>
</dbReference>
<dbReference type="Pfam" id="PF04909">
    <property type="entry name" value="Amidohydro_2"/>
    <property type="match status" value="1"/>
</dbReference>
<dbReference type="SUPFAM" id="SSF51556">
    <property type="entry name" value="Metallo-dependent hydrolases"/>
    <property type="match status" value="1"/>
</dbReference>
<organism>
    <name type="scientific">Sinorhizobium fredii (strain NBRC 101917 / NGR234)</name>
    <dbReference type="NCBI Taxonomy" id="394"/>
    <lineage>
        <taxon>Bacteria</taxon>
        <taxon>Pseudomonadati</taxon>
        <taxon>Pseudomonadota</taxon>
        <taxon>Alphaproteobacteria</taxon>
        <taxon>Hyphomicrobiales</taxon>
        <taxon>Rhizobiaceae</taxon>
        <taxon>Sinorhizobium/Ensifer group</taxon>
        <taxon>Sinorhizobium</taxon>
    </lineage>
</organism>
<name>Y4MH_SINFN</name>
<keyword id="KW-0614">Plasmid</keyword>
<keyword id="KW-1185">Reference proteome</keyword>
<feature type="chain" id="PRO_0000200914" description="Uncharacterized protein y4mH">
    <location>
        <begin position="1"/>
        <end position="297"/>
    </location>
</feature>
<gene>
    <name type="ordered locus">NGR_a02510</name>
    <name type="ORF">y4mH</name>
</gene>
<proteinExistence type="inferred from homology"/>
<protein>
    <recommendedName>
        <fullName>Uncharacterized protein y4mH</fullName>
    </recommendedName>
</protein>
<sequence>MSDIAIIDPHFHLWDLETNYYPWLSDGVKPSAFGDYTAINKTYLIEDFLADAKNQNLVKAVHLDVGFDPTNPAGETKWLQGVADKHGFPHGIVGYADFRKPDVGDLLDEHMQYANFRGIRQSMNFHTDGAKTYLNEPEVSRTPEWRQGFKELARRGLSYDLQLYYWQMEEFLELARDFPDVQIILNHTGMQVDGPSHFEGWRKAMKTLAQAPNVACKISGLGMGNWNWTSESIRPYVEEAIAAFGVDRAMFASNFPVDKLFSSYDAIWNAFKKITVGFSVSERSALFHDNAATFYRV</sequence>
<comment type="similarity">
    <text evidence="1">Belongs to the metallo-dependent hydrolases superfamily.</text>
</comment>
<evidence type="ECO:0000305" key="1"/>
<reference key="1">
    <citation type="journal article" date="1997" name="Nature">
        <title>Molecular basis of symbiosis between Rhizobium and legumes.</title>
        <authorList>
            <person name="Freiberg C.A."/>
            <person name="Fellay R."/>
            <person name="Bairoch A."/>
            <person name="Broughton W.J."/>
            <person name="Rosenthal A."/>
            <person name="Perret X."/>
        </authorList>
    </citation>
    <scope>NUCLEOTIDE SEQUENCE [LARGE SCALE GENOMIC DNA]</scope>
    <source>
        <strain>NBRC 101917 / NGR234</strain>
    </source>
</reference>
<reference key="2">
    <citation type="journal article" date="2009" name="Appl. Environ. Microbiol.">
        <title>Rhizobium sp. strain NGR234 possesses a remarkable number of secretion systems.</title>
        <authorList>
            <person name="Schmeisser C."/>
            <person name="Liesegang H."/>
            <person name="Krysciak D."/>
            <person name="Bakkou N."/>
            <person name="Le Quere A."/>
            <person name="Wollherr A."/>
            <person name="Heinemeyer I."/>
            <person name="Morgenstern B."/>
            <person name="Pommerening-Roeser A."/>
            <person name="Flores M."/>
            <person name="Palacios R."/>
            <person name="Brenner S."/>
            <person name="Gottschalk G."/>
            <person name="Schmitz R.A."/>
            <person name="Broughton W.J."/>
            <person name="Perret X."/>
            <person name="Strittmatter A.W."/>
            <person name="Streit W.R."/>
        </authorList>
    </citation>
    <scope>NUCLEOTIDE SEQUENCE [LARGE SCALE GENOMIC DNA]</scope>
    <source>
        <strain>NBRC 101917 / NGR234</strain>
    </source>
</reference>